<name>MURG_BURPS</name>
<organism>
    <name type="scientific">Burkholderia pseudomallei (strain K96243)</name>
    <dbReference type="NCBI Taxonomy" id="272560"/>
    <lineage>
        <taxon>Bacteria</taxon>
        <taxon>Pseudomonadati</taxon>
        <taxon>Pseudomonadota</taxon>
        <taxon>Betaproteobacteria</taxon>
        <taxon>Burkholderiales</taxon>
        <taxon>Burkholderiaceae</taxon>
        <taxon>Burkholderia</taxon>
        <taxon>pseudomallei group</taxon>
    </lineage>
</organism>
<gene>
    <name evidence="1" type="primary">murG</name>
    <name type="ordered locus">BPSL3025</name>
</gene>
<protein>
    <recommendedName>
        <fullName evidence="1">UDP-N-acetylglucosamine--N-acetylmuramyl-(pentapeptide) pyrophosphoryl-undecaprenol N-acetylglucosamine transferase</fullName>
        <ecNumber evidence="1">2.4.1.227</ecNumber>
    </recommendedName>
    <alternativeName>
        <fullName evidence="1">Undecaprenyl-PP-MurNAc-pentapeptide-UDPGlcNAc GlcNAc transferase</fullName>
    </alternativeName>
</protein>
<sequence length="367" mass="38738">MTSTQRTLMVMAGGTGGHVFPGLAVAHRMQAQGWRVVWLGNPAGMEATLVPRHGIPMEYVRFGGLRGKGLATKFALPFNLLRACAQSLRALRRVKPDVVLGMGGYITFPAGLVTVLTGRPLVLHEQNSIAGLTNKVLAKLAKRVLVAFPGALPNAEWTGNPIRTELARTEPPQARYAARSGKLRLLVVGGSLGAAALNEVVPRALALLAPDERPQVVHQAGAKHIDTLKENYEAAGLSCGSDVALVPFIDDMASAYANADLVICRSGAMTVAEIAAVGVAALFVPFPHAVDDHQTTNAEFLAEQGAAVLVQQRDLSAELLADWLRGQSRDSLAAMAERSRSLAKPDATDEVARVCAAVAGANLEGKQ</sequence>
<reference key="1">
    <citation type="journal article" date="2004" name="Proc. Natl. Acad. Sci. U.S.A.">
        <title>Genomic plasticity of the causative agent of melioidosis, Burkholderia pseudomallei.</title>
        <authorList>
            <person name="Holden M.T.G."/>
            <person name="Titball R.W."/>
            <person name="Peacock S.J."/>
            <person name="Cerdeno-Tarraga A.-M."/>
            <person name="Atkins T."/>
            <person name="Crossman L.C."/>
            <person name="Pitt T."/>
            <person name="Churcher C."/>
            <person name="Mungall K.L."/>
            <person name="Bentley S.D."/>
            <person name="Sebaihia M."/>
            <person name="Thomson N.R."/>
            <person name="Bason N."/>
            <person name="Beacham I.R."/>
            <person name="Brooks K."/>
            <person name="Brown K.A."/>
            <person name="Brown N.F."/>
            <person name="Challis G.L."/>
            <person name="Cherevach I."/>
            <person name="Chillingworth T."/>
            <person name="Cronin A."/>
            <person name="Crossett B."/>
            <person name="Davis P."/>
            <person name="DeShazer D."/>
            <person name="Feltwell T."/>
            <person name="Fraser A."/>
            <person name="Hance Z."/>
            <person name="Hauser H."/>
            <person name="Holroyd S."/>
            <person name="Jagels K."/>
            <person name="Keith K.E."/>
            <person name="Maddison M."/>
            <person name="Moule S."/>
            <person name="Price C."/>
            <person name="Quail M.A."/>
            <person name="Rabbinowitsch E."/>
            <person name="Rutherford K."/>
            <person name="Sanders M."/>
            <person name="Simmonds M."/>
            <person name="Songsivilai S."/>
            <person name="Stevens K."/>
            <person name="Tumapa S."/>
            <person name="Vesaratchavest M."/>
            <person name="Whitehead S."/>
            <person name="Yeats C."/>
            <person name="Barrell B.G."/>
            <person name="Oyston P.C.F."/>
            <person name="Parkhill J."/>
        </authorList>
    </citation>
    <scope>NUCLEOTIDE SEQUENCE [LARGE SCALE GENOMIC DNA]</scope>
    <source>
        <strain>K96243</strain>
    </source>
</reference>
<keyword id="KW-0131">Cell cycle</keyword>
<keyword id="KW-0132">Cell division</keyword>
<keyword id="KW-0997">Cell inner membrane</keyword>
<keyword id="KW-1003">Cell membrane</keyword>
<keyword id="KW-0133">Cell shape</keyword>
<keyword id="KW-0961">Cell wall biogenesis/degradation</keyword>
<keyword id="KW-0328">Glycosyltransferase</keyword>
<keyword id="KW-0472">Membrane</keyword>
<keyword id="KW-0573">Peptidoglycan synthesis</keyword>
<keyword id="KW-1185">Reference proteome</keyword>
<keyword id="KW-0808">Transferase</keyword>
<comment type="function">
    <text evidence="1">Cell wall formation. Catalyzes the transfer of a GlcNAc subunit on undecaprenyl-pyrophosphoryl-MurNAc-pentapeptide (lipid intermediate I) to form undecaprenyl-pyrophosphoryl-MurNAc-(pentapeptide)GlcNAc (lipid intermediate II).</text>
</comment>
<comment type="catalytic activity">
    <reaction evidence="1">
        <text>di-trans,octa-cis-undecaprenyl diphospho-N-acetyl-alpha-D-muramoyl-L-alanyl-D-glutamyl-meso-2,6-diaminopimeloyl-D-alanyl-D-alanine + UDP-N-acetyl-alpha-D-glucosamine = di-trans,octa-cis-undecaprenyl diphospho-[N-acetyl-alpha-D-glucosaminyl-(1-&gt;4)]-N-acetyl-alpha-D-muramoyl-L-alanyl-D-glutamyl-meso-2,6-diaminopimeloyl-D-alanyl-D-alanine + UDP + H(+)</text>
        <dbReference type="Rhea" id="RHEA:31227"/>
        <dbReference type="ChEBI" id="CHEBI:15378"/>
        <dbReference type="ChEBI" id="CHEBI:57705"/>
        <dbReference type="ChEBI" id="CHEBI:58223"/>
        <dbReference type="ChEBI" id="CHEBI:61387"/>
        <dbReference type="ChEBI" id="CHEBI:61388"/>
        <dbReference type="EC" id="2.4.1.227"/>
    </reaction>
</comment>
<comment type="pathway">
    <text evidence="1">Cell wall biogenesis; peptidoglycan biosynthesis.</text>
</comment>
<comment type="subcellular location">
    <subcellularLocation>
        <location evidence="1">Cell inner membrane</location>
        <topology evidence="1">Peripheral membrane protein</topology>
        <orientation evidence="1">Cytoplasmic side</orientation>
    </subcellularLocation>
</comment>
<comment type="similarity">
    <text evidence="1">Belongs to the glycosyltransferase 28 family. MurG subfamily.</text>
</comment>
<proteinExistence type="inferred from homology"/>
<dbReference type="EC" id="2.4.1.227" evidence="1"/>
<dbReference type="EMBL" id="BX571965">
    <property type="protein sequence ID" value="CAH37037.1"/>
    <property type="molecule type" value="Genomic_DNA"/>
</dbReference>
<dbReference type="RefSeq" id="WP_004194182.1">
    <property type="nucleotide sequence ID" value="NZ_CP009538.1"/>
</dbReference>
<dbReference type="RefSeq" id="YP_109621.1">
    <property type="nucleotide sequence ID" value="NC_006350.1"/>
</dbReference>
<dbReference type="SMR" id="Q63QJ7"/>
<dbReference type="STRING" id="272560.BPSL3025"/>
<dbReference type="GeneID" id="93061627"/>
<dbReference type="KEGG" id="bps:BPSL3025"/>
<dbReference type="PATRIC" id="fig|272560.51.peg.2241"/>
<dbReference type="eggNOG" id="COG0707">
    <property type="taxonomic scope" value="Bacteria"/>
</dbReference>
<dbReference type="UniPathway" id="UPA00219"/>
<dbReference type="Proteomes" id="UP000000605">
    <property type="component" value="Chromosome 1"/>
</dbReference>
<dbReference type="GO" id="GO:0005886">
    <property type="term" value="C:plasma membrane"/>
    <property type="evidence" value="ECO:0007669"/>
    <property type="project" value="UniProtKB-SubCell"/>
</dbReference>
<dbReference type="GO" id="GO:0051991">
    <property type="term" value="F:UDP-N-acetyl-D-glucosamine:N-acetylmuramoyl-L-alanyl-D-glutamyl-meso-2,6-diaminopimelyl-D-alanyl-D-alanine-diphosphoundecaprenol 4-beta-N-acetylglucosaminlytransferase activity"/>
    <property type="evidence" value="ECO:0007669"/>
    <property type="project" value="RHEA"/>
</dbReference>
<dbReference type="GO" id="GO:0050511">
    <property type="term" value="F:undecaprenyldiphospho-muramoylpentapeptide beta-N-acetylglucosaminyltransferase activity"/>
    <property type="evidence" value="ECO:0007669"/>
    <property type="project" value="UniProtKB-UniRule"/>
</dbReference>
<dbReference type="GO" id="GO:0005975">
    <property type="term" value="P:carbohydrate metabolic process"/>
    <property type="evidence" value="ECO:0007669"/>
    <property type="project" value="InterPro"/>
</dbReference>
<dbReference type="GO" id="GO:0051301">
    <property type="term" value="P:cell division"/>
    <property type="evidence" value="ECO:0007669"/>
    <property type="project" value="UniProtKB-KW"/>
</dbReference>
<dbReference type="GO" id="GO:0071555">
    <property type="term" value="P:cell wall organization"/>
    <property type="evidence" value="ECO:0007669"/>
    <property type="project" value="UniProtKB-KW"/>
</dbReference>
<dbReference type="GO" id="GO:0030259">
    <property type="term" value="P:lipid glycosylation"/>
    <property type="evidence" value="ECO:0007669"/>
    <property type="project" value="UniProtKB-UniRule"/>
</dbReference>
<dbReference type="GO" id="GO:0009252">
    <property type="term" value="P:peptidoglycan biosynthetic process"/>
    <property type="evidence" value="ECO:0007669"/>
    <property type="project" value="UniProtKB-UniRule"/>
</dbReference>
<dbReference type="GO" id="GO:0008360">
    <property type="term" value="P:regulation of cell shape"/>
    <property type="evidence" value="ECO:0007669"/>
    <property type="project" value="UniProtKB-KW"/>
</dbReference>
<dbReference type="CDD" id="cd03785">
    <property type="entry name" value="GT28_MurG"/>
    <property type="match status" value="1"/>
</dbReference>
<dbReference type="Gene3D" id="3.40.50.2000">
    <property type="entry name" value="Glycogen Phosphorylase B"/>
    <property type="match status" value="2"/>
</dbReference>
<dbReference type="HAMAP" id="MF_00033">
    <property type="entry name" value="MurG"/>
    <property type="match status" value="1"/>
</dbReference>
<dbReference type="InterPro" id="IPR006009">
    <property type="entry name" value="GlcNAc_MurG"/>
</dbReference>
<dbReference type="InterPro" id="IPR007235">
    <property type="entry name" value="Glyco_trans_28_C"/>
</dbReference>
<dbReference type="InterPro" id="IPR004276">
    <property type="entry name" value="GlycoTrans_28_N"/>
</dbReference>
<dbReference type="NCBIfam" id="TIGR01133">
    <property type="entry name" value="murG"/>
    <property type="match status" value="1"/>
</dbReference>
<dbReference type="PANTHER" id="PTHR21015:SF22">
    <property type="entry name" value="GLYCOSYLTRANSFERASE"/>
    <property type="match status" value="1"/>
</dbReference>
<dbReference type="PANTHER" id="PTHR21015">
    <property type="entry name" value="UDP-N-ACETYLGLUCOSAMINE--N-ACETYLMURAMYL-(PENTAPEPTIDE) PYROPHOSPHORYL-UNDECAPRENOL N-ACETYLGLUCOSAMINE TRANSFERASE 1"/>
    <property type="match status" value="1"/>
</dbReference>
<dbReference type="Pfam" id="PF04101">
    <property type="entry name" value="Glyco_tran_28_C"/>
    <property type="match status" value="1"/>
</dbReference>
<dbReference type="Pfam" id="PF03033">
    <property type="entry name" value="Glyco_transf_28"/>
    <property type="match status" value="1"/>
</dbReference>
<dbReference type="SUPFAM" id="SSF53756">
    <property type="entry name" value="UDP-Glycosyltransferase/glycogen phosphorylase"/>
    <property type="match status" value="1"/>
</dbReference>
<evidence type="ECO:0000255" key="1">
    <source>
        <dbReference type="HAMAP-Rule" id="MF_00033"/>
    </source>
</evidence>
<feature type="chain" id="PRO_0000225037" description="UDP-N-acetylglucosamine--N-acetylmuramyl-(pentapeptide) pyrophosphoryl-undecaprenol N-acetylglucosamine transferase">
    <location>
        <begin position="1"/>
        <end position="367"/>
    </location>
</feature>
<feature type="binding site" evidence="1">
    <location>
        <begin position="15"/>
        <end position="17"/>
    </location>
    <ligand>
        <name>UDP-N-acetyl-alpha-D-glucosamine</name>
        <dbReference type="ChEBI" id="CHEBI:57705"/>
    </ligand>
</feature>
<feature type="binding site" evidence="1">
    <location>
        <position position="127"/>
    </location>
    <ligand>
        <name>UDP-N-acetyl-alpha-D-glucosamine</name>
        <dbReference type="ChEBI" id="CHEBI:57705"/>
    </ligand>
</feature>
<feature type="binding site" evidence="1">
    <location>
        <position position="163"/>
    </location>
    <ligand>
        <name>UDP-N-acetyl-alpha-D-glucosamine</name>
        <dbReference type="ChEBI" id="CHEBI:57705"/>
    </ligand>
</feature>
<feature type="binding site" evidence="1">
    <location>
        <position position="191"/>
    </location>
    <ligand>
        <name>UDP-N-acetyl-alpha-D-glucosamine</name>
        <dbReference type="ChEBI" id="CHEBI:57705"/>
    </ligand>
</feature>
<feature type="binding site" evidence="1">
    <location>
        <position position="249"/>
    </location>
    <ligand>
        <name>UDP-N-acetyl-alpha-D-glucosamine</name>
        <dbReference type="ChEBI" id="CHEBI:57705"/>
    </ligand>
</feature>
<feature type="binding site" evidence="1">
    <location>
        <position position="294"/>
    </location>
    <ligand>
        <name>UDP-N-acetyl-alpha-D-glucosamine</name>
        <dbReference type="ChEBI" id="CHEBI:57705"/>
    </ligand>
</feature>
<accession>Q63QJ7</accession>